<keyword id="KW-0004">4Fe-4S</keyword>
<keyword id="KW-0997">Cell inner membrane</keyword>
<keyword id="KW-1003">Cell membrane</keyword>
<keyword id="KW-0408">Iron</keyword>
<keyword id="KW-0411">Iron-sulfur</keyword>
<keyword id="KW-0472">Membrane</keyword>
<keyword id="KW-0479">Metal-binding</keyword>
<keyword id="KW-0520">NAD</keyword>
<keyword id="KW-0874">Quinone</keyword>
<keyword id="KW-1185">Reference proteome</keyword>
<keyword id="KW-0677">Repeat</keyword>
<keyword id="KW-1278">Translocase</keyword>
<keyword id="KW-0830">Ubiquinone</keyword>
<evidence type="ECO:0000255" key="1">
    <source>
        <dbReference type="HAMAP-Rule" id="MF_01351"/>
    </source>
</evidence>
<accession>B0SRH5</accession>
<organism>
    <name type="scientific">Leptospira biflexa serovar Patoc (strain Patoc 1 / ATCC 23582 / Paris)</name>
    <dbReference type="NCBI Taxonomy" id="456481"/>
    <lineage>
        <taxon>Bacteria</taxon>
        <taxon>Pseudomonadati</taxon>
        <taxon>Spirochaetota</taxon>
        <taxon>Spirochaetia</taxon>
        <taxon>Leptospirales</taxon>
        <taxon>Leptospiraceae</taxon>
        <taxon>Leptospira</taxon>
    </lineage>
</organism>
<proteinExistence type="inferred from homology"/>
<name>NUOI_LEPBP</name>
<protein>
    <recommendedName>
        <fullName evidence="1">NADH-quinone oxidoreductase subunit I</fullName>
        <ecNumber evidence="1">7.1.1.-</ecNumber>
    </recommendedName>
    <alternativeName>
        <fullName evidence="1">NADH dehydrogenase I subunit I</fullName>
    </alternativeName>
    <alternativeName>
        <fullName evidence="1">NDH-1 subunit I</fullName>
    </alternativeName>
</protein>
<comment type="function">
    <text evidence="1">NDH-1 shuttles electrons from NADH, via FMN and iron-sulfur (Fe-S) centers, to quinones in the respiratory chain. The immediate electron acceptor for the enzyme in this species is believed to be ubiquinone. Couples the redox reaction to proton translocation (for every two electrons transferred, four hydrogen ions are translocated across the cytoplasmic membrane), and thus conserves the redox energy in a proton gradient.</text>
</comment>
<comment type="catalytic activity">
    <reaction evidence="1">
        <text>a quinone + NADH + 5 H(+)(in) = a quinol + NAD(+) + 4 H(+)(out)</text>
        <dbReference type="Rhea" id="RHEA:57888"/>
        <dbReference type="ChEBI" id="CHEBI:15378"/>
        <dbReference type="ChEBI" id="CHEBI:24646"/>
        <dbReference type="ChEBI" id="CHEBI:57540"/>
        <dbReference type="ChEBI" id="CHEBI:57945"/>
        <dbReference type="ChEBI" id="CHEBI:132124"/>
    </reaction>
</comment>
<comment type="cofactor">
    <cofactor evidence="1">
        <name>[4Fe-4S] cluster</name>
        <dbReference type="ChEBI" id="CHEBI:49883"/>
    </cofactor>
    <text evidence="1">Binds 2 [4Fe-4S] clusters per subunit.</text>
</comment>
<comment type="subunit">
    <text evidence="1">NDH-1 is composed of 14 different subunits. Subunits NuoA, H, J, K, L, M, N constitute the membrane sector of the complex.</text>
</comment>
<comment type="subcellular location">
    <subcellularLocation>
        <location evidence="1">Cell inner membrane</location>
        <topology evidence="1">Peripheral membrane protein</topology>
    </subcellularLocation>
</comment>
<comment type="similarity">
    <text evidence="1">Belongs to the complex I 23 kDa subunit family.</text>
</comment>
<feature type="chain" id="PRO_1000143650" description="NADH-quinone oxidoreductase subunit I">
    <location>
        <begin position="1"/>
        <end position="175"/>
    </location>
</feature>
<feature type="domain" description="4Fe-4S ferredoxin-type 1" evidence="1">
    <location>
        <begin position="69"/>
        <end position="98"/>
    </location>
</feature>
<feature type="domain" description="4Fe-4S ferredoxin-type 2" evidence="1">
    <location>
        <begin position="115"/>
        <end position="144"/>
    </location>
</feature>
<feature type="binding site" evidence="1">
    <location>
        <position position="78"/>
    </location>
    <ligand>
        <name>[4Fe-4S] cluster</name>
        <dbReference type="ChEBI" id="CHEBI:49883"/>
        <label>1</label>
    </ligand>
</feature>
<feature type="binding site" evidence="1">
    <location>
        <position position="81"/>
    </location>
    <ligand>
        <name>[4Fe-4S] cluster</name>
        <dbReference type="ChEBI" id="CHEBI:49883"/>
        <label>1</label>
    </ligand>
</feature>
<feature type="binding site" evidence="1">
    <location>
        <position position="84"/>
    </location>
    <ligand>
        <name>[4Fe-4S] cluster</name>
        <dbReference type="ChEBI" id="CHEBI:49883"/>
        <label>1</label>
    </ligand>
</feature>
<feature type="binding site" evidence="1">
    <location>
        <position position="88"/>
    </location>
    <ligand>
        <name>[4Fe-4S] cluster</name>
        <dbReference type="ChEBI" id="CHEBI:49883"/>
        <label>2</label>
    </ligand>
</feature>
<feature type="binding site" evidence="1">
    <location>
        <position position="124"/>
    </location>
    <ligand>
        <name>[4Fe-4S] cluster</name>
        <dbReference type="ChEBI" id="CHEBI:49883"/>
        <label>2</label>
    </ligand>
</feature>
<feature type="binding site" evidence="1">
    <location>
        <position position="127"/>
    </location>
    <ligand>
        <name>[4Fe-4S] cluster</name>
        <dbReference type="ChEBI" id="CHEBI:49883"/>
        <label>2</label>
    </ligand>
</feature>
<feature type="binding site" evidence="1">
    <location>
        <position position="130"/>
    </location>
    <ligand>
        <name>[4Fe-4S] cluster</name>
        <dbReference type="ChEBI" id="CHEBI:49883"/>
        <label>2</label>
    </ligand>
</feature>
<feature type="binding site" evidence="1">
    <location>
        <position position="134"/>
    </location>
    <ligand>
        <name>[4Fe-4S] cluster</name>
        <dbReference type="ChEBI" id="CHEBI:49883"/>
        <label>1</label>
    </ligand>
</feature>
<reference key="1">
    <citation type="journal article" date="2008" name="PLoS ONE">
        <title>Genome sequence of the saprophyte Leptospira biflexa provides insights into the evolution of Leptospira and the pathogenesis of leptospirosis.</title>
        <authorList>
            <person name="Picardeau M."/>
            <person name="Bulach D.M."/>
            <person name="Bouchier C."/>
            <person name="Zuerner R.L."/>
            <person name="Zidane N."/>
            <person name="Wilson P.J."/>
            <person name="Creno S."/>
            <person name="Kuczek E.S."/>
            <person name="Bommezzadri S."/>
            <person name="Davis J.C."/>
            <person name="McGrath A."/>
            <person name="Johnson M.J."/>
            <person name="Boursaux-Eude C."/>
            <person name="Seemann T."/>
            <person name="Rouy Z."/>
            <person name="Coppel R.L."/>
            <person name="Rood J.I."/>
            <person name="Lajus A."/>
            <person name="Davies J.K."/>
            <person name="Medigue C."/>
            <person name="Adler B."/>
        </authorList>
    </citation>
    <scope>NUCLEOTIDE SEQUENCE [LARGE SCALE GENOMIC DNA]</scope>
    <source>
        <strain>Patoc 1 / ATCC 23582 / Paris</strain>
    </source>
</reference>
<gene>
    <name evidence="1" type="primary">nuoI</name>
    <name type="ordered locus">LEPBI_I3405</name>
</gene>
<dbReference type="EC" id="7.1.1.-" evidence="1"/>
<dbReference type="EMBL" id="CP000786">
    <property type="protein sequence ID" value="ABZ99467.1"/>
    <property type="molecule type" value="Genomic_DNA"/>
</dbReference>
<dbReference type="RefSeq" id="WP_012390323.1">
    <property type="nucleotide sequence ID" value="NC_010602.1"/>
</dbReference>
<dbReference type="SMR" id="B0SRH5"/>
<dbReference type="STRING" id="456481.LEPBI_I3405"/>
<dbReference type="KEGG" id="lbi:LEPBI_I3405"/>
<dbReference type="HOGENOM" id="CLU_067218_4_3_12"/>
<dbReference type="OrthoDB" id="9798098at2"/>
<dbReference type="BioCyc" id="LBIF456481:LEPBI_RS16680-MONOMER"/>
<dbReference type="Proteomes" id="UP000001847">
    <property type="component" value="Chromosome I"/>
</dbReference>
<dbReference type="GO" id="GO:0005886">
    <property type="term" value="C:plasma membrane"/>
    <property type="evidence" value="ECO:0007669"/>
    <property type="project" value="UniProtKB-SubCell"/>
</dbReference>
<dbReference type="GO" id="GO:0051539">
    <property type="term" value="F:4 iron, 4 sulfur cluster binding"/>
    <property type="evidence" value="ECO:0007669"/>
    <property type="project" value="UniProtKB-KW"/>
</dbReference>
<dbReference type="GO" id="GO:0005506">
    <property type="term" value="F:iron ion binding"/>
    <property type="evidence" value="ECO:0007669"/>
    <property type="project" value="UniProtKB-UniRule"/>
</dbReference>
<dbReference type="GO" id="GO:0050136">
    <property type="term" value="F:NADH:ubiquinone reductase (non-electrogenic) activity"/>
    <property type="evidence" value="ECO:0007669"/>
    <property type="project" value="UniProtKB-UniRule"/>
</dbReference>
<dbReference type="GO" id="GO:0048038">
    <property type="term" value="F:quinone binding"/>
    <property type="evidence" value="ECO:0007669"/>
    <property type="project" value="UniProtKB-KW"/>
</dbReference>
<dbReference type="GO" id="GO:0009060">
    <property type="term" value="P:aerobic respiration"/>
    <property type="evidence" value="ECO:0007669"/>
    <property type="project" value="TreeGrafter"/>
</dbReference>
<dbReference type="Gene3D" id="3.30.70.3270">
    <property type="match status" value="1"/>
</dbReference>
<dbReference type="HAMAP" id="MF_01351">
    <property type="entry name" value="NDH1_NuoI"/>
    <property type="match status" value="1"/>
</dbReference>
<dbReference type="InterPro" id="IPR017896">
    <property type="entry name" value="4Fe4S_Fe-S-bd"/>
</dbReference>
<dbReference type="InterPro" id="IPR017900">
    <property type="entry name" value="4Fe4S_Fe_S_CS"/>
</dbReference>
<dbReference type="InterPro" id="IPR010226">
    <property type="entry name" value="NADH_quinone_OxRdtase_chainI"/>
</dbReference>
<dbReference type="NCBIfam" id="TIGR01971">
    <property type="entry name" value="NuoI"/>
    <property type="match status" value="1"/>
</dbReference>
<dbReference type="PANTHER" id="PTHR10849:SF20">
    <property type="entry name" value="NADH DEHYDROGENASE [UBIQUINONE] IRON-SULFUR PROTEIN 8, MITOCHONDRIAL"/>
    <property type="match status" value="1"/>
</dbReference>
<dbReference type="PANTHER" id="PTHR10849">
    <property type="entry name" value="NADH DEHYDROGENASE UBIQUINONE IRON-SULFUR PROTEIN 8, MITOCHONDRIAL"/>
    <property type="match status" value="1"/>
</dbReference>
<dbReference type="Pfam" id="PF12838">
    <property type="entry name" value="Fer4_7"/>
    <property type="match status" value="1"/>
</dbReference>
<dbReference type="SUPFAM" id="SSF54862">
    <property type="entry name" value="4Fe-4S ferredoxins"/>
    <property type="match status" value="1"/>
</dbReference>
<dbReference type="PROSITE" id="PS00198">
    <property type="entry name" value="4FE4S_FER_1"/>
    <property type="match status" value="2"/>
</dbReference>
<dbReference type="PROSITE" id="PS51379">
    <property type="entry name" value="4FE4S_FER_2"/>
    <property type="match status" value="2"/>
</dbReference>
<sequence length="175" mass="20403">MGTVNVVNVAKKHQFSWYEKFYFWSIGKGLWITLKHFVKVAFFNKQVTIEYPDKKRQYSTRFRGMHSMKRDEQGRERCTACFCCMWICPANAIHIEAAEVTAERQHLHPEDKYAKKFEINLLRCIFCGLCEEACPKGAIYLDGTGEMAADNREDLFLTKERMMEKTGGPILGQRN</sequence>